<keyword id="KW-1003">Cell membrane</keyword>
<keyword id="KW-0472">Membrane</keyword>
<keyword id="KW-1185">Reference proteome</keyword>
<keyword id="KW-0677">Repeat</keyword>
<keyword id="KW-0812">Transmembrane</keyword>
<keyword id="KW-1133">Transmembrane helix</keyword>
<keyword id="KW-0813">Transport</keyword>
<evidence type="ECO:0000255" key="1"/>
<evidence type="ECO:0000255" key="2">
    <source>
        <dbReference type="PROSITE-ProRule" id="PRU00544"/>
    </source>
</evidence>
<evidence type="ECO:0000305" key="3"/>
<protein>
    <recommendedName>
        <fullName>Uncharacterized transporter STH2172</fullName>
    </recommendedName>
</protein>
<organism>
    <name type="scientific">Symbiobacterium thermophilum (strain DSM 24528 / JCM 14929 / IAM 14863 / T)</name>
    <dbReference type="NCBI Taxonomy" id="292459"/>
    <lineage>
        <taxon>Bacteria</taxon>
        <taxon>Bacillati</taxon>
        <taxon>Bacillota</taxon>
        <taxon>Clostridia</taxon>
        <taxon>Eubacteriales</taxon>
        <taxon>Symbiobacteriaceae</taxon>
        <taxon>Symbiobacterium</taxon>
    </lineage>
</organism>
<name>Y2172_SYMTH</name>
<sequence length="542" mass="58366">MLDILRDNPLLLLFIVAGIGYPLGRVRIGGIHLGVAAVLFVGLAFGALDPSLKLPEIVYQFGLALFVYCVGLSSGHGFLRSFRGKGVIYNLLTLGVILLAAALLLIPHYLLSLRPGETAGVFAGLLTSTPALAAAVEYLTRAGAAGQLSDPVVGYSIAYPASVLGVILAIYLAERCFRIDYRAEARTLKDVPGVSPEITCWTLRVCRPKAFGRTVRDLVAEHRLQVVFGRIRRGDHADVVSWETHLEEGDLVTAVGPVEELERAAQVIGCVSEVQADLDRSEVDMREVFVSNPEVAGRTLRELNLPNRFGAVVSRVWRGDLQLLPYADMPLELGDRVRVLSRRERQQEVAAYLGDSYRAISEIDIAVLGLGMALGIGLGLVPIPLPGGITVRLGLAGGPLIVALFLGARQRTGSLVWVLPYSANMLLRQMGLTIFLAAVGTRSGYEFAQMLTQPRGWAILGASAAIIVLLSWVMLYVGYRWLRIPMGLLTGMVAGMQTQSATLGFALDQAGNDLPTVGYAMVYPMAMVVKIVLAPVIIAVLT</sequence>
<comment type="subcellular location">
    <subcellularLocation>
        <location evidence="3">Cell membrane</location>
        <topology evidence="3">Multi-pass membrane protein</topology>
    </subcellularLocation>
</comment>
<comment type="similarity">
    <text evidence="3">Belongs to the AAE transporter (TC 2.A.81) family.</text>
</comment>
<reference key="1">
    <citation type="journal article" date="2004" name="Nucleic Acids Res.">
        <title>Genome sequence of Symbiobacterium thermophilum, an uncultivable bacterium that depends on microbial commensalism.</title>
        <authorList>
            <person name="Ueda K."/>
            <person name="Yamashita A."/>
            <person name="Ishikawa J."/>
            <person name="Shimada M."/>
            <person name="Watsuji T."/>
            <person name="Morimura K."/>
            <person name="Ikeda H."/>
            <person name="Hattori M."/>
            <person name="Beppu T."/>
        </authorList>
    </citation>
    <scope>NUCLEOTIDE SEQUENCE [LARGE SCALE GENOMIC DNA]</scope>
    <source>
        <strain>DSM 24528 / JCM 14929 / IAM 14863 / T</strain>
    </source>
</reference>
<dbReference type="EMBL" id="AP006840">
    <property type="protein sequence ID" value="BAD41157.1"/>
    <property type="molecule type" value="Genomic_DNA"/>
</dbReference>
<dbReference type="RefSeq" id="WP_011196297.1">
    <property type="nucleotide sequence ID" value="NC_006177.1"/>
</dbReference>
<dbReference type="SMR" id="Q67MD6"/>
<dbReference type="STRING" id="292459.STH2172"/>
<dbReference type="KEGG" id="sth:STH2172"/>
<dbReference type="eggNOG" id="COG0569">
    <property type="taxonomic scope" value="Bacteria"/>
</dbReference>
<dbReference type="eggNOG" id="COG2985">
    <property type="taxonomic scope" value="Bacteria"/>
</dbReference>
<dbReference type="HOGENOM" id="CLU_035023_3_0_9"/>
<dbReference type="OrthoDB" id="9155749at2"/>
<dbReference type="Proteomes" id="UP000000417">
    <property type="component" value="Chromosome"/>
</dbReference>
<dbReference type="GO" id="GO:0005886">
    <property type="term" value="C:plasma membrane"/>
    <property type="evidence" value="ECO:0007669"/>
    <property type="project" value="UniProtKB-SubCell"/>
</dbReference>
<dbReference type="GO" id="GO:0008324">
    <property type="term" value="F:monoatomic cation transmembrane transporter activity"/>
    <property type="evidence" value="ECO:0007669"/>
    <property type="project" value="InterPro"/>
</dbReference>
<dbReference type="GO" id="GO:0006813">
    <property type="term" value="P:potassium ion transport"/>
    <property type="evidence" value="ECO:0007669"/>
    <property type="project" value="InterPro"/>
</dbReference>
<dbReference type="Gene3D" id="3.30.70.1450">
    <property type="entry name" value="Regulator of K+ conductance, C-terminal domain"/>
    <property type="match status" value="2"/>
</dbReference>
<dbReference type="InterPro" id="IPR050144">
    <property type="entry name" value="AAE_transporter"/>
</dbReference>
<dbReference type="InterPro" id="IPR006037">
    <property type="entry name" value="RCK_C"/>
</dbReference>
<dbReference type="InterPro" id="IPR036721">
    <property type="entry name" value="RCK_C_sf"/>
</dbReference>
<dbReference type="InterPro" id="IPR006512">
    <property type="entry name" value="YidE_YbjL"/>
</dbReference>
<dbReference type="NCBIfam" id="TIGR01625">
    <property type="entry name" value="YidE_YbjL_dupl"/>
    <property type="match status" value="2"/>
</dbReference>
<dbReference type="PANTHER" id="PTHR30445">
    <property type="entry name" value="K(+)_H(+) ANTIPORTER SUBUNIT KHTT"/>
    <property type="match status" value="1"/>
</dbReference>
<dbReference type="PANTHER" id="PTHR30445:SF3">
    <property type="entry name" value="TRANSPORT PROTEIN YIDE-RELATED"/>
    <property type="match status" value="1"/>
</dbReference>
<dbReference type="Pfam" id="PF06826">
    <property type="entry name" value="Asp-Al_Ex"/>
    <property type="match status" value="2"/>
</dbReference>
<dbReference type="Pfam" id="PF02080">
    <property type="entry name" value="TrkA_C"/>
    <property type="match status" value="1"/>
</dbReference>
<dbReference type="SUPFAM" id="SSF116726">
    <property type="entry name" value="TrkA C-terminal domain-like"/>
    <property type="match status" value="2"/>
</dbReference>
<dbReference type="PROSITE" id="PS51202">
    <property type="entry name" value="RCK_C"/>
    <property type="match status" value="2"/>
</dbReference>
<proteinExistence type="inferred from homology"/>
<accession>Q67MD6</accession>
<gene>
    <name type="ordered locus">STH2172</name>
</gene>
<feature type="chain" id="PRO_0000208780" description="Uncharacterized transporter STH2172">
    <location>
        <begin position="1"/>
        <end position="542"/>
    </location>
</feature>
<feature type="transmembrane region" description="Helical" evidence="1">
    <location>
        <begin position="4"/>
        <end position="23"/>
    </location>
</feature>
<feature type="transmembrane region" description="Helical" evidence="1">
    <location>
        <begin position="28"/>
        <end position="47"/>
    </location>
</feature>
<feature type="transmembrane region" description="Helical" evidence="1">
    <location>
        <begin position="57"/>
        <end position="79"/>
    </location>
</feature>
<feature type="transmembrane region" description="Helical" evidence="1">
    <location>
        <begin position="86"/>
        <end position="108"/>
    </location>
</feature>
<feature type="transmembrane region" description="Helical" evidence="1">
    <location>
        <begin position="151"/>
        <end position="173"/>
    </location>
</feature>
<feature type="transmembrane region" description="Helical" evidence="1">
    <location>
        <begin position="365"/>
        <end position="384"/>
    </location>
</feature>
<feature type="transmembrane region" description="Helical" evidence="1">
    <location>
        <begin position="389"/>
        <end position="408"/>
    </location>
</feature>
<feature type="transmembrane region" description="Helical" evidence="1">
    <location>
        <begin position="415"/>
        <end position="437"/>
    </location>
</feature>
<feature type="transmembrane region" description="Helical" evidence="1">
    <location>
        <begin position="457"/>
        <end position="479"/>
    </location>
</feature>
<feature type="transmembrane region" description="Helical" evidence="1">
    <location>
        <begin position="484"/>
        <end position="506"/>
    </location>
</feature>
<feature type="transmembrane region" description="Helical" evidence="1">
    <location>
        <begin position="519"/>
        <end position="541"/>
    </location>
</feature>
<feature type="domain" description="RCK C-terminal 1" evidence="2">
    <location>
        <begin position="186"/>
        <end position="270"/>
    </location>
</feature>
<feature type="domain" description="RCK C-terminal 2" evidence="2">
    <location>
        <begin position="273"/>
        <end position="356"/>
    </location>
</feature>